<evidence type="ECO:0000255" key="1">
    <source>
        <dbReference type="HAMAP-Rule" id="MF_01337"/>
    </source>
</evidence>
<evidence type="ECO:0000305" key="2"/>
<protein>
    <recommendedName>
        <fullName evidence="1">Large ribosomal subunit protein uL18</fullName>
    </recommendedName>
    <alternativeName>
        <fullName evidence="2">50S ribosomal protein L18</fullName>
    </alternativeName>
</protein>
<accession>B8G1Y2</accession>
<sequence>MITQIDRKAIRMKKHKRVRKSVFGTAERPRLAVFRSLNHIYAQVINDELGVTLATASSLDAEFKAAELAGGNVEGAKKVGELVAKRAQEKGVSKVVFDRGGNIYHGRIAAVAEAAREAGLEF</sequence>
<organism>
    <name type="scientific">Desulfitobacterium hafniense (strain DSM 10664 / DCB-2)</name>
    <dbReference type="NCBI Taxonomy" id="272564"/>
    <lineage>
        <taxon>Bacteria</taxon>
        <taxon>Bacillati</taxon>
        <taxon>Bacillota</taxon>
        <taxon>Clostridia</taxon>
        <taxon>Eubacteriales</taxon>
        <taxon>Desulfitobacteriaceae</taxon>
        <taxon>Desulfitobacterium</taxon>
    </lineage>
</organism>
<keyword id="KW-0687">Ribonucleoprotein</keyword>
<keyword id="KW-0689">Ribosomal protein</keyword>
<keyword id="KW-0694">RNA-binding</keyword>
<keyword id="KW-0699">rRNA-binding</keyword>
<reference key="1">
    <citation type="journal article" date="2012" name="BMC Microbiol.">
        <title>Genome sequence of Desulfitobacterium hafniense DCB-2, a Gram-positive anaerobe capable of dehalogenation and metal reduction.</title>
        <authorList>
            <person name="Kim S.H."/>
            <person name="Harzman C."/>
            <person name="Davis J.K."/>
            <person name="Hutcheson R."/>
            <person name="Broderick J.B."/>
            <person name="Marsh T.L."/>
            <person name="Tiedje J.M."/>
        </authorList>
    </citation>
    <scope>NUCLEOTIDE SEQUENCE [LARGE SCALE GENOMIC DNA]</scope>
    <source>
        <strain>DSM 10664 / DCB-2</strain>
    </source>
</reference>
<gene>
    <name evidence="1" type="primary">rplR</name>
    <name type="ordered locus">Dhaf_0438</name>
</gene>
<feature type="chain" id="PRO_1000166225" description="Large ribosomal subunit protein uL18">
    <location>
        <begin position="1"/>
        <end position="122"/>
    </location>
</feature>
<dbReference type="EMBL" id="CP001336">
    <property type="protein sequence ID" value="ACL18505.1"/>
    <property type="molecule type" value="Genomic_DNA"/>
</dbReference>
<dbReference type="RefSeq" id="WP_015942763.1">
    <property type="nucleotide sequence ID" value="NC_011830.1"/>
</dbReference>
<dbReference type="SMR" id="B8G1Y2"/>
<dbReference type="KEGG" id="dhd:Dhaf_0438"/>
<dbReference type="HOGENOM" id="CLU_098841_0_1_9"/>
<dbReference type="Proteomes" id="UP000007726">
    <property type="component" value="Chromosome"/>
</dbReference>
<dbReference type="GO" id="GO:0022625">
    <property type="term" value="C:cytosolic large ribosomal subunit"/>
    <property type="evidence" value="ECO:0007669"/>
    <property type="project" value="TreeGrafter"/>
</dbReference>
<dbReference type="GO" id="GO:0008097">
    <property type="term" value="F:5S rRNA binding"/>
    <property type="evidence" value="ECO:0007669"/>
    <property type="project" value="TreeGrafter"/>
</dbReference>
<dbReference type="GO" id="GO:0003735">
    <property type="term" value="F:structural constituent of ribosome"/>
    <property type="evidence" value="ECO:0007669"/>
    <property type="project" value="InterPro"/>
</dbReference>
<dbReference type="GO" id="GO:0006412">
    <property type="term" value="P:translation"/>
    <property type="evidence" value="ECO:0007669"/>
    <property type="project" value="UniProtKB-UniRule"/>
</dbReference>
<dbReference type="CDD" id="cd00432">
    <property type="entry name" value="Ribosomal_L18_L5e"/>
    <property type="match status" value="1"/>
</dbReference>
<dbReference type="FunFam" id="3.30.420.100:FF:000001">
    <property type="entry name" value="50S ribosomal protein L18"/>
    <property type="match status" value="1"/>
</dbReference>
<dbReference type="Gene3D" id="3.30.420.100">
    <property type="match status" value="1"/>
</dbReference>
<dbReference type="HAMAP" id="MF_01337_B">
    <property type="entry name" value="Ribosomal_uL18_B"/>
    <property type="match status" value="1"/>
</dbReference>
<dbReference type="InterPro" id="IPR004389">
    <property type="entry name" value="Ribosomal_uL18_bac-type"/>
</dbReference>
<dbReference type="InterPro" id="IPR005484">
    <property type="entry name" value="Ribosomal_uL18_bac/euk"/>
</dbReference>
<dbReference type="NCBIfam" id="TIGR00060">
    <property type="entry name" value="L18_bact"/>
    <property type="match status" value="1"/>
</dbReference>
<dbReference type="PANTHER" id="PTHR12899">
    <property type="entry name" value="39S RIBOSOMAL PROTEIN L18, MITOCHONDRIAL"/>
    <property type="match status" value="1"/>
</dbReference>
<dbReference type="PANTHER" id="PTHR12899:SF3">
    <property type="entry name" value="LARGE RIBOSOMAL SUBUNIT PROTEIN UL18M"/>
    <property type="match status" value="1"/>
</dbReference>
<dbReference type="Pfam" id="PF00861">
    <property type="entry name" value="Ribosomal_L18p"/>
    <property type="match status" value="1"/>
</dbReference>
<dbReference type="SUPFAM" id="SSF53137">
    <property type="entry name" value="Translational machinery components"/>
    <property type="match status" value="1"/>
</dbReference>
<name>RL18_DESHD</name>
<comment type="function">
    <text evidence="1">This is one of the proteins that bind and probably mediate the attachment of the 5S RNA into the large ribosomal subunit, where it forms part of the central protuberance.</text>
</comment>
<comment type="subunit">
    <text evidence="1">Part of the 50S ribosomal subunit; part of the 5S rRNA/L5/L18/L25 subcomplex. Contacts the 5S and 23S rRNAs.</text>
</comment>
<comment type="similarity">
    <text evidence="1">Belongs to the universal ribosomal protein uL18 family.</text>
</comment>
<proteinExistence type="inferred from homology"/>